<gene>
    <name type="primary">leH3</name>
</gene>
<evidence type="ECO:0000250" key="1"/>
<evidence type="ECO:0000256" key="2">
    <source>
        <dbReference type="SAM" id="MobiDB-lite"/>
    </source>
</evidence>
<evidence type="ECO:0000269" key="3">
    <source>
    </source>
</evidence>
<evidence type="ECO:0000305" key="4"/>
<name>H3L3_LILLO</name>
<sequence length="155" mass="17442">MARMKLNARMSTGGKAPRKQLAYKAVRKAAPPTIGVKLPNSYRPGDQTVCKPAPPTDGVKEPHRYRPGKMGLREIRKYKKNARFFISKLPFHRLVRKITQNLKAHLRFQSTAMPAPEEVSEAYLVKLFEDAIHAKRVTLVPKDIQLARCIGGVLA</sequence>
<comment type="function">
    <text>Core component of nucleosome. Nucleosomes wrap and compact DNA into chromatin, limiting DNA accessibility to the cellular machineries which require DNA as a template. Histones thereby play a central role in transcription regulation, DNA repair, DNA replication and chromosomal stability. DNA accessibility is regulated via a complex set of post-translational modifications of histones, also called histone code, and nucleosome remodeling.</text>
</comment>
<comment type="subunit">
    <text>The nucleosome is a histone octamer containing two molecules each of H2A, H2B, H3 and H4 assembled in one H3-H4 heterotetramer and two H2A-H2B heterodimers. The octamer wraps approximately 147 bp of DNA.</text>
</comment>
<comment type="subcellular location">
    <subcellularLocation>
        <location>Nucleus</location>
    </subcellularLocation>
    <subcellularLocation>
        <location>Chromosome</location>
    </subcellularLocation>
</comment>
<comment type="tissue specificity">
    <text evidence="3">Pollen specific.</text>
</comment>
<comment type="developmental stage">
    <text evidence="3">Detected in the generative cell of bicellular pollen. Also expressed in uninucleate microspores.</text>
</comment>
<comment type="similarity">
    <text evidence="4">Belongs to the histone H3 family.</text>
</comment>
<protein>
    <recommendedName>
        <fullName>Histone H3-like 3</fullName>
    </recommendedName>
    <alternativeName>
        <fullName>Histone leH3</fullName>
    </alternativeName>
    <alternativeName>
        <fullName>Late embryonic-like histone H3</fullName>
    </alternativeName>
</protein>
<feature type="initiator methionine" description="Removed" evidence="1">
    <location>
        <position position="1"/>
    </location>
</feature>
<feature type="chain" id="PRO_0000263050" description="Histone H3-like 3">
    <location>
        <begin position="2"/>
        <end position="155"/>
    </location>
</feature>
<feature type="region of interest" description="Disordered" evidence="2">
    <location>
        <begin position="34"/>
        <end position="59"/>
    </location>
</feature>
<feature type="sequence conflict" description="In Ref. 1; BAE48432." evidence="4" ref="1">
    <original>P</original>
    <variation>Q</variation>
    <location>
        <position position="32"/>
    </location>
</feature>
<feature type="sequence conflict" description="In Ref. 1; BAE48432." evidence="4" ref="1">
    <original>E</original>
    <variation>G</variation>
    <location>
        <position position="74"/>
    </location>
</feature>
<reference key="1">
    <citation type="journal article" date="2006" name="Plant Mol. Biol.">
        <title>Histone H3 variants in male gametic cells of lily and H3 methylation in mature pollen.</title>
        <authorList>
            <person name="Okada T."/>
            <person name="Singh M.B."/>
            <person name="Bhalla P.L."/>
        </authorList>
    </citation>
    <scope>NUCLEOTIDE SEQUENCE [GENOMIC DNA / MRNA]</scope>
    <scope>DEVELOPMENTAL STAGE</scope>
    <scope>TISSUE SPECIFICITY</scope>
    <source>
        <strain>cv. White Fox</strain>
    </source>
</reference>
<organism>
    <name type="scientific">Lilium longiflorum</name>
    <name type="common">Trumpet lily</name>
    <dbReference type="NCBI Taxonomy" id="4690"/>
    <lineage>
        <taxon>Eukaryota</taxon>
        <taxon>Viridiplantae</taxon>
        <taxon>Streptophyta</taxon>
        <taxon>Embryophyta</taxon>
        <taxon>Tracheophyta</taxon>
        <taxon>Spermatophyta</taxon>
        <taxon>Magnoliopsida</taxon>
        <taxon>Liliopsida</taxon>
        <taxon>Liliales</taxon>
        <taxon>Liliaceae</taxon>
        <taxon>Lilium</taxon>
    </lineage>
</organism>
<proteinExistence type="evidence at transcript level"/>
<accession>Q2Z2F6</accession>
<accession>Q2Z2F5</accession>
<keyword id="KW-0158">Chromosome</keyword>
<keyword id="KW-0238">DNA-binding</keyword>
<keyword id="KW-0544">Nucleosome core</keyword>
<keyword id="KW-0539">Nucleus</keyword>
<dbReference type="EMBL" id="AB195648">
    <property type="protein sequence ID" value="BAE48431.1"/>
    <property type="molecule type" value="mRNA"/>
</dbReference>
<dbReference type="EMBL" id="AB195649">
    <property type="protein sequence ID" value="BAE48432.1"/>
    <property type="molecule type" value="Genomic_DNA"/>
</dbReference>
<dbReference type="SMR" id="Q2Z2F6"/>
<dbReference type="GO" id="GO:0000786">
    <property type="term" value="C:nucleosome"/>
    <property type="evidence" value="ECO:0007669"/>
    <property type="project" value="UniProtKB-KW"/>
</dbReference>
<dbReference type="GO" id="GO:0005634">
    <property type="term" value="C:nucleus"/>
    <property type="evidence" value="ECO:0007669"/>
    <property type="project" value="UniProtKB-SubCell"/>
</dbReference>
<dbReference type="GO" id="GO:0003677">
    <property type="term" value="F:DNA binding"/>
    <property type="evidence" value="ECO:0007669"/>
    <property type="project" value="UniProtKB-KW"/>
</dbReference>
<dbReference type="GO" id="GO:0046982">
    <property type="term" value="F:protein heterodimerization activity"/>
    <property type="evidence" value="ECO:0007669"/>
    <property type="project" value="InterPro"/>
</dbReference>
<dbReference type="GO" id="GO:0030527">
    <property type="term" value="F:structural constituent of chromatin"/>
    <property type="evidence" value="ECO:0007669"/>
    <property type="project" value="InterPro"/>
</dbReference>
<dbReference type="CDD" id="cd22911">
    <property type="entry name" value="HFD_H3"/>
    <property type="match status" value="1"/>
</dbReference>
<dbReference type="FunFam" id="1.10.20.10:FF:000085">
    <property type="entry name" value="Histone H3.2"/>
    <property type="match status" value="1"/>
</dbReference>
<dbReference type="Gene3D" id="1.10.20.10">
    <property type="entry name" value="Histone, subunit A"/>
    <property type="match status" value="2"/>
</dbReference>
<dbReference type="InterPro" id="IPR009072">
    <property type="entry name" value="Histone-fold"/>
</dbReference>
<dbReference type="InterPro" id="IPR007125">
    <property type="entry name" value="Histone_H2A/H2B/H3"/>
</dbReference>
<dbReference type="InterPro" id="IPR000164">
    <property type="entry name" value="Histone_H3/CENP-A"/>
</dbReference>
<dbReference type="PANTHER" id="PTHR11426">
    <property type="entry name" value="HISTONE H3"/>
    <property type="match status" value="1"/>
</dbReference>
<dbReference type="Pfam" id="PF00125">
    <property type="entry name" value="Histone"/>
    <property type="match status" value="1"/>
</dbReference>
<dbReference type="PRINTS" id="PR00622">
    <property type="entry name" value="HISTONEH3"/>
</dbReference>
<dbReference type="SMART" id="SM00428">
    <property type="entry name" value="H3"/>
    <property type="match status" value="1"/>
</dbReference>
<dbReference type="SUPFAM" id="SSF47113">
    <property type="entry name" value="Histone-fold"/>
    <property type="match status" value="1"/>
</dbReference>
<dbReference type="PROSITE" id="PS00322">
    <property type="entry name" value="HISTONE_H3_1"/>
    <property type="match status" value="1"/>
</dbReference>